<evidence type="ECO:0000255" key="1">
    <source>
        <dbReference type="HAMAP-Rule" id="MF_01618"/>
    </source>
</evidence>
<gene>
    <name evidence="1" type="primary">fadI</name>
    <name type="ordered locus">Swoo_3027</name>
</gene>
<keyword id="KW-0012">Acyltransferase</keyword>
<keyword id="KW-0963">Cytoplasm</keyword>
<keyword id="KW-0276">Fatty acid metabolism</keyword>
<keyword id="KW-0442">Lipid degradation</keyword>
<keyword id="KW-0443">Lipid metabolism</keyword>
<keyword id="KW-1185">Reference proteome</keyword>
<keyword id="KW-0808">Transferase</keyword>
<protein>
    <recommendedName>
        <fullName evidence="1">3-ketoacyl-CoA thiolase</fullName>
        <ecNumber evidence="1">2.3.1.16</ecNumber>
    </recommendedName>
    <alternativeName>
        <fullName evidence="1">ACSs</fullName>
    </alternativeName>
    <alternativeName>
        <fullName evidence="1">Acetyl-CoA acyltransferase</fullName>
    </alternativeName>
    <alternativeName>
        <fullName evidence="1">Acyl-CoA ligase</fullName>
    </alternativeName>
    <alternativeName>
        <fullName evidence="1">Beta-ketothiolase</fullName>
    </alternativeName>
    <alternativeName>
        <fullName evidence="1">Fatty acid oxidation complex subunit beta</fullName>
    </alternativeName>
</protein>
<name>FADI_SHEWM</name>
<feature type="chain" id="PRO_1000185981" description="3-ketoacyl-CoA thiolase">
    <location>
        <begin position="1"/>
        <end position="436"/>
    </location>
</feature>
<feature type="active site" description="Acyl-thioester intermediate" evidence="1">
    <location>
        <position position="99"/>
    </location>
</feature>
<feature type="active site" description="Proton acceptor" evidence="1">
    <location>
        <position position="392"/>
    </location>
</feature>
<feature type="active site" description="Proton acceptor" evidence="1">
    <location>
        <position position="422"/>
    </location>
</feature>
<accession>B1KKT1</accession>
<reference key="1">
    <citation type="submission" date="2008-02" db="EMBL/GenBank/DDBJ databases">
        <title>Complete sequence of Shewanella woodyi ATCC 51908.</title>
        <authorList>
            <consortium name="US DOE Joint Genome Institute"/>
            <person name="Copeland A."/>
            <person name="Lucas S."/>
            <person name="Lapidus A."/>
            <person name="Glavina del Rio T."/>
            <person name="Dalin E."/>
            <person name="Tice H."/>
            <person name="Bruce D."/>
            <person name="Goodwin L."/>
            <person name="Pitluck S."/>
            <person name="Sims D."/>
            <person name="Brettin T."/>
            <person name="Detter J.C."/>
            <person name="Han C."/>
            <person name="Kuske C.R."/>
            <person name="Schmutz J."/>
            <person name="Larimer F."/>
            <person name="Land M."/>
            <person name="Hauser L."/>
            <person name="Kyrpides N."/>
            <person name="Lykidis A."/>
            <person name="Zhao J.-S."/>
            <person name="Richardson P."/>
        </authorList>
    </citation>
    <scope>NUCLEOTIDE SEQUENCE [LARGE SCALE GENOMIC DNA]</scope>
    <source>
        <strain>ATCC 51908 / MS32</strain>
    </source>
</reference>
<organism>
    <name type="scientific">Shewanella woodyi (strain ATCC 51908 / MS32)</name>
    <dbReference type="NCBI Taxonomy" id="392500"/>
    <lineage>
        <taxon>Bacteria</taxon>
        <taxon>Pseudomonadati</taxon>
        <taxon>Pseudomonadota</taxon>
        <taxon>Gammaproteobacteria</taxon>
        <taxon>Alteromonadales</taxon>
        <taxon>Shewanellaceae</taxon>
        <taxon>Shewanella</taxon>
    </lineage>
</organism>
<proteinExistence type="inferred from homology"/>
<sequence length="436" mass="46565">MSDRQQVTNAKGDRIAIVTGLRTPFAKQATAFHGVSALDMGKMVVNELLSRSELDPKEIQQLVYGQVVQMPAAPNIAREIVLGTGMDIATDAYSVTRACATSFQSTVNVAESIMTGNIDIGIAGGSDSSSVLPIGVSKKLAHGLVDLNKARSFGQKLAIFRRLGLKDLLPVPPAVAEYSTGLSMGQTAEQMAKTYNISRADQDALAHRSHSLATETWNSGNLAQEVMTAHVPPYKAFIDRDNNIRENSSIESYAKLRPAFDRKHGTVTAATSTPLTDGASAILLMSESRAKALGYNPIGYIKSYAFSAIDVWEDMLMGPSYATPIALKRAGMELEDLTLIEMHEAFAAQALANMKMFASKKFAQEKLGRNRAIGEIDMNKFNVLGGSLAYGHPFAATGARLITQVCNELKRRGGGTGLTTACAAGGLGAAMIVEVE</sequence>
<comment type="function">
    <text evidence="1">Catalyzes the final step of fatty acid oxidation in which acetyl-CoA is released and the CoA ester of a fatty acid two carbons shorter is formed.</text>
</comment>
<comment type="catalytic activity">
    <reaction evidence="1">
        <text>an acyl-CoA + acetyl-CoA = a 3-oxoacyl-CoA + CoA</text>
        <dbReference type="Rhea" id="RHEA:21564"/>
        <dbReference type="ChEBI" id="CHEBI:57287"/>
        <dbReference type="ChEBI" id="CHEBI:57288"/>
        <dbReference type="ChEBI" id="CHEBI:58342"/>
        <dbReference type="ChEBI" id="CHEBI:90726"/>
        <dbReference type="EC" id="2.3.1.16"/>
    </reaction>
</comment>
<comment type="pathway">
    <text evidence="1">Lipid metabolism; fatty acid beta-oxidation.</text>
</comment>
<comment type="subunit">
    <text evidence="1">Heterotetramer of two alpha chains (FadJ) and two beta chains (FadI).</text>
</comment>
<comment type="subcellular location">
    <subcellularLocation>
        <location evidence="1">Cytoplasm</location>
    </subcellularLocation>
</comment>
<comment type="similarity">
    <text evidence="1">Belongs to the thiolase-like superfamily. Thiolase family.</text>
</comment>
<dbReference type="EC" id="2.3.1.16" evidence="1"/>
<dbReference type="EMBL" id="CP000961">
    <property type="protein sequence ID" value="ACA87298.1"/>
    <property type="molecule type" value="Genomic_DNA"/>
</dbReference>
<dbReference type="RefSeq" id="WP_012325634.1">
    <property type="nucleotide sequence ID" value="NC_010506.1"/>
</dbReference>
<dbReference type="SMR" id="B1KKT1"/>
<dbReference type="STRING" id="392500.Swoo_3027"/>
<dbReference type="KEGG" id="swd:Swoo_3027"/>
<dbReference type="eggNOG" id="COG0183">
    <property type="taxonomic scope" value="Bacteria"/>
</dbReference>
<dbReference type="HOGENOM" id="CLU_031026_2_0_6"/>
<dbReference type="UniPathway" id="UPA00659"/>
<dbReference type="Proteomes" id="UP000002168">
    <property type="component" value="Chromosome"/>
</dbReference>
<dbReference type="GO" id="GO:0005829">
    <property type="term" value="C:cytosol"/>
    <property type="evidence" value="ECO:0007669"/>
    <property type="project" value="TreeGrafter"/>
</dbReference>
<dbReference type="GO" id="GO:0003988">
    <property type="term" value="F:acetyl-CoA C-acyltransferase activity"/>
    <property type="evidence" value="ECO:0007669"/>
    <property type="project" value="UniProtKB-UniRule"/>
</dbReference>
<dbReference type="GO" id="GO:0006635">
    <property type="term" value="P:fatty acid beta-oxidation"/>
    <property type="evidence" value="ECO:0007669"/>
    <property type="project" value="UniProtKB-UniRule"/>
</dbReference>
<dbReference type="CDD" id="cd00751">
    <property type="entry name" value="thiolase"/>
    <property type="match status" value="1"/>
</dbReference>
<dbReference type="FunFam" id="3.40.47.10:FF:000011">
    <property type="entry name" value="3-ketoacyl-CoA thiolase"/>
    <property type="match status" value="1"/>
</dbReference>
<dbReference type="Gene3D" id="3.40.47.10">
    <property type="match status" value="1"/>
</dbReference>
<dbReference type="HAMAP" id="MF_01618">
    <property type="entry name" value="FadI"/>
    <property type="match status" value="1"/>
</dbReference>
<dbReference type="InterPro" id="IPR050521">
    <property type="entry name" value="3-ketoacyl-CoA_Thiolase"/>
</dbReference>
<dbReference type="InterPro" id="IPR012806">
    <property type="entry name" value="Ac-CoA_C-AcTrfase_FadI"/>
</dbReference>
<dbReference type="InterPro" id="IPR002155">
    <property type="entry name" value="Thiolase"/>
</dbReference>
<dbReference type="InterPro" id="IPR016039">
    <property type="entry name" value="Thiolase-like"/>
</dbReference>
<dbReference type="InterPro" id="IPR020610">
    <property type="entry name" value="Thiolase_AS"/>
</dbReference>
<dbReference type="InterPro" id="IPR020617">
    <property type="entry name" value="Thiolase_C"/>
</dbReference>
<dbReference type="InterPro" id="IPR020613">
    <property type="entry name" value="Thiolase_CS"/>
</dbReference>
<dbReference type="InterPro" id="IPR020616">
    <property type="entry name" value="Thiolase_N"/>
</dbReference>
<dbReference type="NCBIfam" id="TIGR01930">
    <property type="entry name" value="AcCoA-C-Actrans"/>
    <property type="match status" value="1"/>
</dbReference>
<dbReference type="NCBIfam" id="TIGR02446">
    <property type="entry name" value="FadI"/>
    <property type="match status" value="1"/>
</dbReference>
<dbReference type="NCBIfam" id="NF006516">
    <property type="entry name" value="PRK08963.1"/>
    <property type="match status" value="1"/>
</dbReference>
<dbReference type="PANTHER" id="PTHR42689">
    <property type="entry name" value="ACETYL-COA ACYLTRANSFERASE FADA2 (3-KETOACYL-COA THIOLASE) (BETA-KETOTHIOLASE)-RELATED"/>
    <property type="match status" value="1"/>
</dbReference>
<dbReference type="PANTHER" id="PTHR42689:SF1">
    <property type="entry name" value="ACETYL-COA ACYLTRANSFERASE FADA2 (3-KETOACYL-COA THIOLASE) (BETA-KETOTHIOLASE)-RELATED"/>
    <property type="match status" value="1"/>
</dbReference>
<dbReference type="Pfam" id="PF02803">
    <property type="entry name" value="Thiolase_C"/>
    <property type="match status" value="1"/>
</dbReference>
<dbReference type="Pfam" id="PF00108">
    <property type="entry name" value="Thiolase_N"/>
    <property type="match status" value="1"/>
</dbReference>
<dbReference type="PIRSF" id="PIRSF000429">
    <property type="entry name" value="Ac-CoA_Ac_transf"/>
    <property type="match status" value="1"/>
</dbReference>
<dbReference type="SUPFAM" id="SSF53901">
    <property type="entry name" value="Thiolase-like"/>
    <property type="match status" value="2"/>
</dbReference>
<dbReference type="PROSITE" id="PS00737">
    <property type="entry name" value="THIOLASE_2"/>
    <property type="match status" value="1"/>
</dbReference>
<dbReference type="PROSITE" id="PS00099">
    <property type="entry name" value="THIOLASE_3"/>
    <property type="match status" value="1"/>
</dbReference>